<gene>
    <name type="ORF">GF16066</name>
</gene>
<reference key="1">
    <citation type="journal article" date="2007" name="Nature">
        <title>Evolution of genes and genomes on the Drosophila phylogeny.</title>
        <authorList>
            <consortium name="Drosophila 12 genomes consortium"/>
        </authorList>
    </citation>
    <scope>NUCLEOTIDE SEQUENCE [LARGE SCALE GENOMIC DNA]</scope>
    <source>
        <strain>Tucson 14024-0371.13</strain>
    </source>
</reference>
<dbReference type="EC" id="3.1.3.77" evidence="1"/>
<dbReference type="EMBL" id="CH902617">
    <property type="protein sequence ID" value="EDV44343.1"/>
    <property type="molecule type" value="Genomic_DNA"/>
</dbReference>
<dbReference type="SMR" id="B3M173"/>
<dbReference type="FunCoup" id="B3M173">
    <property type="interactions" value="2090"/>
</dbReference>
<dbReference type="STRING" id="7217.B3M173"/>
<dbReference type="EnsemblMetazoa" id="FBtr0120766">
    <property type="protein sequence ID" value="FBpp0119258"/>
    <property type="gene ID" value="FBgn0093088"/>
</dbReference>
<dbReference type="EnsemblMetazoa" id="XM_001955746.4">
    <property type="protein sequence ID" value="XP_001955782.1"/>
    <property type="gene ID" value="LOC6498863"/>
</dbReference>
<dbReference type="GeneID" id="6498863"/>
<dbReference type="KEGG" id="dan:6498863"/>
<dbReference type="CTD" id="40630"/>
<dbReference type="eggNOG" id="KOG2630">
    <property type="taxonomic scope" value="Eukaryota"/>
</dbReference>
<dbReference type="HOGENOM" id="CLU_023273_0_0_1"/>
<dbReference type="InParanoid" id="B3M173"/>
<dbReference type="OMA" id="LQGMVWE"/>
<dbReference type="OrthoDB" id="272500at2759"/>
<dbReference type="PhylomeDB" id="B3M173"/>
<dbReference type="UniPathway" id="UPA00904">
    <property type="reaction ID" value="UER00876"/>
</dbReference>
<dbReference type="UniPathway" id="UPA00904">
    <property type="reaction ID" value="UER00877"/>
</dbReference>
<dbReference type="Proteomes" id="UP000007801">
    <property type="component" value="Unassembled WGS sequence"/>
</dbReference>
<dbReference type="GO" id="GO:0005737">
    <property type="term" value="C:cytoplasm"/>
    <property type="evidence" value="ECO:0007669"/>
    <property type="project" value="UniProtKB-SubCell"/>
</dbReference>
<dbReference type="GO" id="GO:0005634">
    <property type="term" value="C:nucleus"/>
    <property type="evidence" value="ECO:0007669"/>
    <property type="project" value="UniProtKB-SubCell"/>
</dbReference>
<dbReference type="GO" id="GO:0043874">
    <property type="term" value="F:acireductone synthase activity"/>
    <property type="evidence" value="ECO:0007669"/>
    <property type="project" value="UniProtKB-EC"/>
</dbReference>
<dbReference type="GO" id="GO:0000287">
    <property type="term" value="F:magnesium ion binding"/>
    <property type="evidence" value="ECO:0007669"/>
    <property type="project" value="UniProtKB-UniRule"/>
</dbReference>
<dbReference type="GO" id="GO:0019509">
    <property type="term" value="P:L-methionine salvage from methylthioadenosine"/>
    <property type="evidence" value="ECO:0007669"/>
    <property type="project" value="UniProtKB-UniRule"/>
</dbReference>
<dbReference type="CDD" id="cd01629">
    <property type="entry name" value="HAD_EP"/>
    <property type="match status" value="1"/>
</dbReference>
<dbReference type="FunFam" id="3.40.50.1000:FF:000079">
    <property type="entry name" value="Enolase-phosphatase E1"/>
    <property type="match status" value="1"/>
</dbReference>
<dbReference type="Gene3D" id="1.10.720.60">
    <property type="match status" value="1"/>
</dbReference>
<dbReference type="Gene3D" id="3.40.50.1000">
    <property type="entry name" value="HAD superfamily/HAD-like"/>
    <property type="match status" value="1"/>
</dbReference>
<dbReference type="HAMAP" id="MF_01681">
    <property type="entry name" value="Salvage_MtnC"/>
    <property type="match status" value="1"/>
</dbReference>
<dbReference type="HAMAP" id="MF_03117">
    <property type="entry name" value="Salvage_MtnC_euk"/>
    <property type="match status" value="1"/>
</dbReference>
<dbReference type="InterPro" id="IPR023943">
    <property type="entry name" value="Enolase-ppase_E1"/>
</dbReference>
<dbReference type="InterPro" id="IPR027511">
    <property type="entry name" value="ENOPH1_eukaryotes"/>
</dbReference>
<dbReference type="InterPro" id="IPR036412">
    <property type="entry name" value="HAD-like_sf"/>
</dbReference>
<dbReference type="InterPro" id="IPR006439">
    <property type="entry name" value="HAD-SF_hydro_IA"/>
</dbReference>
<dbReference type="InterPro" id="IPR023214">
    <property type="entry name" value="HAD_sf"/>
</dbReference>
<dbReference type="NCBIfam" id="TIGR01691">
    <property type="entry name" value="enolase-ppase"/>
    <property type="match status" value="1"/>
</dbReference>
<dbReference type="PANTHER" id="PTHR20371">
    <property type="entry name" value="ENOLASE-PHOSPHATASE E1"/>
    <property type="match status" value="1"/>
</dbReference>
<dbReference type="PANTHER" id="PTHR20371:SF1">
    <property type="entry name" value="ENOLASE-PHOSPHATASE E1"/>
    <property type="match status" value="1"/>
</dbReference>
<dbReference type="Pfam" id="PF00702">
    <property type="entry name" value="Hydrolase"/>
    <property type="match status" value="1"/>
</dbReference>
<dbReference type="PRINTS" id="PR00413">
    <property type="entry name" value="HADHALOGNASE"/>
</dbReference>
<dbReference type="SFLD" id="SFLDG01133">
    <property type="entry name" value="C1.5.4:_Enolase-phosphatase_Li"/>
    <property type="match status" value="1"/>
</dbReference>
<dbReference type="SFLD" id="SFLDF00044">
    <property type="entry name" value="enolase-phosphatase"/>
    <property type="match status" value="1"/>
</dbReference>
<dbReference type="SUPFAM" id="SSF56784">
    <property type="entry name" value="HAD-like"/>
    <property type="match status" value="1"/>
</dbReference>
<name>ENOPH_DROAN</name>
<feature type="chain" id="PRO_0000393976" description="Enolase-phosphatase E1">
    <location>
        <begin position="1"/>
        <end position="252"/>
    </location>
</feature>
<feature type="binding site" evidence="1">
    <location>
        <position position="14"/>
    </location>
    <ligand>
        <name>Mg(2+)</name>
        <dbReference type="ChEBI" id="CHEBI:18420"/>
    </ligand>
</feature>
<feature type="binding site" evidence="1">
    <location>
        <position position="16"/>
    </location>
    <ligand>
        <name>Mg(2+)</name>
        <dbReference type="ChEBI" id="CHEBI:18420"/>
    </ligand>
</feature>
<feature type="binding site" evidence="1">
    <location>
        <begin position="142"/>
        <end position="143"/>
    </location>
    <ligand>
        <name>substrate</name>
    </ligand>
</feature>
<feature type="binding site" evidence="1">
    <location>
        <position position="176"/>
    </location>
    <ligand>
        <name>substrate</name>
    </ligand>
</feature>
<feature type="binding site" evidence="1">
    <location>
        <position position="201"/>
    </location>
    <ligand>
        <name>Mg(2+)</name>
        <dbReference type="ChEBI" id="CHEBI:18420"/>
    </ligand>
</feature>
<protein>
    <recommendedName>
        <fullName evidence="1">Enolase-phosphatase E1</fullName>
        <ecNumber evidence="1">3.1.3.77</ecNumber>
    </recommendedName>
    <alternativeName>
        <fullName evidence="1">2,3-diketo-5-methylthio-1-phosphopentane phosphatase</fullName>
    </alternativeName>
</protein>
<proteinExistence type="inferred from homology"/>
<evidence type="ECO:0000255" key="1">
    <source>
        <dbReference type="HAMAP-Rule" id="MF_03117"/>
    </source>
</evidence>
<accession>B3M173</accession>
<comment type="function">
    <text evidence="1">Bifunctional enzyme that catalyzes the enolization of 2,3-diketo-5-methylthiopentyl-1-phosphate (DK-MTP-1-P) into the intermediate 2-hydroxy-3-keto-5-methylthiopentenyl-1-phosphate (HK-MTPenyl-1-P), which is then dephosphorylated to form the acireductone 1,2-dihydroxy-3-keto-5-methylthiopentene (DHK-MTPene).</text>
</comment>
<comment type="catalytic activity">
    <reaction evidence="1">
        <text>5-methylsulfanyl-2,3-dioxopentyl phosphate + H2O = 1,2-dihydroxy-5-(methylsulfanyl)pent-1-en-3-one + phosphate</text>
        <dbReference type="Rhea" id="RHEA:21700"/>
        <dbReference type="ChEBI" id="CHEBI:15377"/>
        <dbReference type="ChEBI" id="CHEBI:43474"/>
        <dbReference type="ChEBI" id="CHEBI:49252"/>
        <dbReference type="ChEBI" id="CHEBI:58828"/>
        <dbReference type="EC" id="3.1.3.77"/>
    </reaction>
</comment>
<comment type="cofactor">
    <cofactor evidence="1">
        <name>Mg(2+)</name>
        <dbReference type="ChEBI" id="CHEBI:18420"/>
    </cofactor>
    <text evidence="1">Binds 1 Mg(2+) ion per subunit.</text>
</comment>
<comment type="pathway">
    <text evidence="1">Amino-acid biosynthesis; L-methionine biosynthesis via salvage pathway; L-methionine from S-methyl-5-thio-alpha-D-ribose 1-phosphate: step 3/6.</text>
</comment>
<comment type="pathway">
    <text evidence="1">Amino-acid biosynthesis; L-methionine biosynthesis via salvage pathway; L-methionine from S-methyl-5-thio-alpha-D-ribose 1-phosphate: step 4/6.</text>
</comment>
<comment type="subunit">
    <text evidence="1">Monomer.</text>
</comment>
<comment type="subcellular location">
    <subcellularLocation>
        <location evidence="1">Cytoplasm</location>
    </subcellularLocation>
    <subcellularLocation>
        <location evidence="1">Nucleus</location>
    </subcellularLocation>
</comment>
<comment type="similarity">
    <text evidence="1">Belongs to the HAD-like hydrolase superfamily. MasA/MtnC family.</text>
</comment>
<organism>
    <name type="scientific">Drosophila ananassae</name>
    <name type="common">Fruit fly</name>
    <dbReference type="NCBI Taxonomy" id="7217"/>
    <lineage>
        <taxon>Eukaryota</taxon>
        <taxon>Metazoa</taxon>
        <taxon>Ecdysozoa</taxon>
        <taxon>Arthropoda</taxon>
        <taxon>Hexapoda</taxon>
        <taxon>Insecta</taxon>
        <taxon>Pterygota</taxon>
        <taxon>Neoptera</taxon>
        <taxon>Endopterygota</taxon>
        <taxon>Diptera</taxon>
        <taxon>Brachycera</taxon>
        <taxon>Muscomorpha</taxon>
        <taxon>Ephydroidea</taxon>
        <taxon>Drosophilidae</taxon>
        <taxon>Drosophila</taxon>
        <taxon>Sophophora</taxon>
    </lineage>
</organism>
<keyword id="KW-0028">Amino-acid biosynthesis</keyword>
<keyword id="KW-0963">Cytoplasm</keyword>
<keyword id="KW-0378">Hydrolase</keyword>
<keyword id="KW-0460">Magnesium</keyword>
<keyword id="KW-0479">Metal-binding</keyword>
<keyword id="KW-0486">Methionine biosynthesis</keyword>
<keyword id="KW-0539">Nucleus</keyword>
<keyword id="KW-1185">Reference proteome</keyword>
<sequence length="252" mass="28142">MTAEKREAKVVLVDIEGTTTSISFVHQVLFPHAKENVEKYLKEYWENEETKQIVEDLQQVPQYADYQATLSAPPAVVDVKVIAGFVRYLIDKDLKVTPMKTLQGLIWACGYASGELKGHVYEDVPDAFRAWQKAGLRIAVYSSGSVDAQKLIFGYSVAGNLLPYLSDHFDTHVGHKQEQQSYVNISNSLREKPQNILFLTDIPGEASAALSAGLQTIILHRPGNGPLSDDQKSNYEVIPDFKSLYSLQLPQK</sequence>